<feature type="chain" id="PRO_1000049174" description="Homoserine kinase">
    <location>
        <begin position="1"/>
        <end position="289"/>
    </location>
</feature>
<feature type="binding site" evidence="1">
    <location>
        <begin position="79"/>
        <end position="89"/>
    </location>
    <ligand>
        <name>ATP</name>
        <dbReference type="ChEBI" id="CHEBI:30616"/>
    </ligand>
</feature>
<comment type="function">
    <text evidence="1">Catalyzes the ATP-dependent phosphorylation of L-homoserine to L-homoserine phosphate.</text>
</comment>
<comment type="catalytic activity">
    <reaction evidence="1">
        <text>L-homoserine + ATP = O-phospho-L-homoserine + ADP + H(+)</text>
        <dbReference type="Rhea" id="RHEA:13985"/>
        <dbReference type="ChEBI" id="CHEBI:15378"/>
        <dbReference type="ChEBI" id="CHEBI:30616"/>
        <dbReference type="ChEBI" id="CHEBI:57476"/>
        <dbReference type="ChEBI" id="CHEBI:57590"/>
        <dbReference type="ChEBI" id="CHEBI:456216"/>
        <dbReference type="EC" id="2.7.1.39"/>
    </reaction>
</comment>
<comment type="pathway">
    <text evidence="1">Amino-acid biosynthesis; L-threonine biosynthesis; L-threonine from L-aspartate: step 4/5.</text>
</comment>
<comment type="subcellular location">
    <subcellularLocation>
        <location evidence="1">Cytoplasm</location>
    </subcellularLocation>
</comment>
<comment type="similarity">
    <text evidence="1">Belongs to the GHMP kinase family. Homoserine kinase subfamily.</text>
</comment>
<protein>
    <recommendedName>
        <fullName evidence="1">Homoserine kinase</fullName>
        <shortName evidence="1">HK</shortName>
        <shortName evidence="1">HSK</shortName>
        <ecNumber evidence="1">2.7.1.39</ecNumber>
    </recommendedName>
</protein>
<sequence length="289" mass="31548">MKIIVPATSANIGPGFDSVGVAVTKYLQIEVCEERDEWLIEHQIGKWIPHDERNLLLKIALQIVPDLQPRRLKMTSDVPLARGLGSSSSVIVAGIELANQLGQLNLSDHEKLQLATKIEGHPDNVAPAIYGNLVIASSVEGQVSAIVADFPECDFLAYIPNYELRTRDSRSVLPKKLSYKEAVAASSIANVAVAALLAGDMVTAGQAIEGDLFHERYRQDLVREFAMIKQVTKENGAYATYLSGAGPTVMVLASHDKMPTIKAELEKQPFKGKLHDLRVDTQGVRVEAK</sequence>
<proteinExistence type="inferred from homology"/>
<dbReference type="EC" id="2.7.1.39" evidence="1"/>
<dbReference type="EMBL" id="CP000410">
    <property type="protein sequence ID" value="ABJ55397.1"/>
    <property type="molecule type" value="Genomic_DNA"/>
</dbReference>
<dbReference type="RefSeq" id="WP_000692438.1">
    <property type="nucleotide sequence ID" value="NZ_JAMLJR010000005.1"/>
</dbReference>
<dbReference type="SMR" id="Q04JY7"/>
<dbReference type="PaxDb" id="373153-SPD_1194"/>
<dbReference type="GeneID" id="45653380"/>
<dbReference type="KEGG" id="spd:SPD_1194"/>
<dbReference type="eggNOG" id="COG0083">
    <property type="taxonomic scope" value="Bacteria"/>
</dbReference>
<dbReference type="HOGENOM" id="CLU_041243_0_0_9"/>
<dbReference type="BioCyc" id="SPNE373153:G1G6V-1291-MONOMER"/>
<dbReference type="UniPathway" id="UPA00050">
    <property type="reaction ID" value="UER00064"/>
</dbReference>
<dbReference type="Proteomes" id="UP000001452">
    <property type="component" value="Chromosome"/>
</dbReference>
<dbReference type="GO" id="GO:0005737">
    <property type="term" value="C:cytoplasm"/>
    <property type="evidence" value="ECO:0007669"/>
    <property type="project" value="UniProtKB-SubCell"/>
</dbReference>
<dbReference type="GO" id="GO:0005524">
    <property type="term" value="F:ATP binding"/>
    <property type="evidence" value="ECO:0007669"/>
    <property type="project" value="UniProtKB-UniRule"/>
</dbReference>
<dbReference type="GO" id="GO:0004413">
    <property type="term" value="F:homoserine kinase activity"/>
    <property type="evidence" value="ECO:0007669"/>
    <property type="project" value="UniProtKB-UniRule"/>
</dbReference>
<dbReference type="GO" id="GO:0009088">
    <property type="term" value="P:threonine biosynthetic process"/>
    <property type="evidence" value="ECO:0007669"/>
    <property type="project" value="UniProtKB-UniRule"/>
</dbReference>
<dbReference type="Gene3D" id="3.30.230.10">
    <property type="match status" value="1"/>
</dbReference>
<dbReference type="Gene3D" id="3.30.70.890">
    <property type="entry name" value="GHMP kinase, C-terminal domain"/>
    <property type="match status" value="1"/>
</dbReference>
<dbReference type="HAMAP" id="MF_00384">
    <property type="entry name" value="Homoser_kinase"/>
    <property type="match status" value="1"/>
</dbReference>
<dbReference type="InterPro" id="IPR013750">
    <property type="entry name" value="GHMP_kinase_C_dom"/>
</dbReference>
<dbReference type="InterPro" id="IPR036554">
    <property type="entry name" value="GHMP_kinase_C_sf"/>
</dbReference>
<dbReference type="InterPro" id="IPR006204">
    <property type="entry name" value="GHMP_kinase_N_dom"/>
</dbReference>
<dbReference type="InterPro" id="IPR006203">
    <property type="entry name" value="GHMP_knse_ATP-bd_CS"/>
</dbReference>
<dbReference type="InterPro" id="IPR000870">
    <property type="entry name" value="Homoserine_kinase"/>
</dbReference>
<dbReference type="InterPro" id="IPR020568">
    <property type="entry name" value="Ribosomal_Su5_D2-typ_SF"/>
</dbReference>
<dbReference type="InterPro" id="IPR014721">
    <property type="entry name" value="Ribsml_uS5_D2-typ_fold_subgr"/>
</dbReference>
<dbReference type="NCBIfam" id="TIGR00191">
    <property type="entry name" value="thrB"/>
    <property type="match status" value="1"/>
</dbReference>
<dbReference type="PANTHER" id="PTHR20861:SF1">
    <property type="entry name" value="HOMOSERINE KINASE"/>
    <property type="match status" value="1"/>
</dbReference>
<dbReference type="PANTHER" id="PTHR20861">
    <property type="entry name" value="HOMOSERINE/4-DIPHOSPHOCYTIDYL-2-C-METHYL-D-ERYTHRITOL KINASE"/>
    <property type="match status" value="1"/>
</dbReference>
<dbReference type="Pfam" id="PF08544">
    <property type="entry name" value="GHMP_kinases_C"/>
    <property type="match status" value="1"/>
</dbReference>
<dbReference type="Pfam" id="PF00288">
    <property type="entry name" value="GHMP_kinases_N"/>
    <property type="match status" value="1"/>
</dbReference>
<dbReference type="PIRSF" id="PIRSF000676">
    <property type="entry name" value="Homoser_kin"/>
    <property type="match status" value="1"/>
</dbReference>
<dbReference type="PRINTS" id="PR00958">
    <property type="entry name" value="HOMSERKINASE"/>
</dbReference>
<dbReference type="SUPFAM" id="SSF55060">
    <property type="entry name" value="GHMP Kinase, C-terminal domain"/>
    <property type="match status" value="1"/>
</dbReference>
<dbReference type="SUPFAM" id="SSF54211">
    <property type="entry name" value="Ribosomal protein S5 domain 2-like"/>
    <property type="match status" value="1"/>
</dbReference>
<dbReference type="PROSITE" id="PS00627">
    <property type="entry name" value="GHMP_KINASES_ATP"/>
    <property type="match status" value="1"/>
</dbReference>
<reference key="1">
    <citation type="journal article" date="2007" name="J. Bacteriol.">
        <title>Genome sequence of Avery's virulent serotype 2 strain D39 of Streptococcus pneumoniae and comparison with that of unencapsulated laboratory strain R6.</title>
        <authorList>
            <person name="Lanie J.A."/>
            <person name="Ng W.-L."/>
            <person name="Kazmierczak K.M."/>
            <person name="Andrzejewski T.M."/>
            <person name="Davidsen T.M."/>
            <person name="Wayne K.J."/>
            <person name="Tettelin H."/>
            <person name="Glass J.I."/>
            <person name="Winkler M.E."/>
        </authorList>
    </citation>
    <scope>NUCLEOTIDE SEQUENCE [LARGE SCALE GENOMIC DNA]</scope>
    <source>
        <strain>D39 / NCTC 7466</strain>
    </source>
</reference>
<gene>
    <name evidence="1" type="primary">thrB</name>
    <name type="ordered locus">SPD_1194</name>
</gene>
<name>KHSE_STRP2</name>
<evidence type="ECO:0000255" key="1">
    <source>
        <dbReference type="HAMAP-Rule" id="MF_00384"/>
    </source>
</evidence>
<keyword id="KW-0028">Amino-acid biosynthesis</keyword>
<keyword id="KW-0067">ATP-binding</keyword>
<keyword id="KW-0963">Cytoplasm</keyword>
<keyword id="KW-0418">Kinase</keyword>
<keyword id="KW-0547">Nucleotide-binding</keyword>
<keyword id="KW-1185">Reference proteome</keyword>
<keyword id="KW-0791">Threonine biosynthesis</keyword>
<keyword id="KW-0808">Transferase</keyword>
<organism>
    <name type="scientific">Streptococcus pneumoniae serotype 2 (strain D39 / NCTC 7466)</name>
    <dbReference type="NCBI Taxonomy" id="373153"/>
    <lineage>
        <taxon>Bacteria</taxon>
        <taxon>Bacillati</taxon>
        <taxon>Bacillota</taxon>
        <taxon>Bacilli</taxon>
        <taxon>Lactobacillales</taxon>
        <taxon>Streptococcaceae</taxon>
        <taxon>Streptococcus</taxon>
    </lineage>
</organism>
<accession>Q04JY7</accession>